<dbReference type="EMBL" id="BC088486">
    <property type="protein sequence ID" value="AAH88486.1"/>
    <property type="molecule type" value="mRNA"/>
</dbReference>
<dbReference type="RefSeq" id="NP_001011337.1">
    <property type="nucleotide sequence ID" value="NM_001011337.1"/>
</dbReference>
<dbReference type="SMR" id="Q5M7S0"/>
<dbReference type="FunCoup" id="Q5M7S0">
    <property type="interactions" value="1642"/>
</dbReference>
<dbReference type="STRING" id="8364.ENSXETP00000037759"/>
<dbReference type="GlyCosmos" id="Q5M7S0">
    <property type="glycosylation" value="4 sites, No reported glycans"/>
</dbReference>
<dbReference type="PaxDb" id="8364-ENSXETP00000058281"/>
<dbReference type="DNASU" id="496801"/>
<dbReference type="GeneID" id="496801"/>
<dbReference type="KEGG" id="xtr:496801"/>
<dbReference type="AGR" id="Xenbase:XB-GENE-5823434"/>
<dbReference type="CTD" id="153129"/>
<dbReference type="eggNOG" id="KOG1305">
    <property type="taxonomic scope" value="Eukaryota"/>
</dbReference>
<dbReference type="HOGENOM" id="CLU_037564_0_0_1"/>
<dbReference type="InParanoid" id="Q5M7S0"/>
<dbReference type="OMA" id="HWFTPTE"/>
<dbReference type="OrthoDB" id="294730at2759"/>
<dbReference type="PhylomeDB" id="Q5M7S0"/>
<dbReference type="TreeFam" id="TF312989"/>
<dbReference type="Reactome" id="R-XTR-1632852">
    <property type="pathway name" value="Macroautophagy"/>
</dbReference>
<dbReference type="Reactome" id="R-XTR-165159">
    <property type="pathway name" value="MTOR signalling"/>
</dbReference>
<dbReference type="Reactome" id="R-XTR-380972">
    <property type="pathway name" value="Energy dependent regulation of mTOR by LKB1-AMPK"/>
</dbReference>
<dbReference type="Reactome" id="R-XTR-5628897">
    <property type="pathway name" value="TP53 Regulates Metabolic Genes"/>
</dbReference>
<dbReference type="Reactome" id="R-XTR-9639288">
    <property type="pathway name" value="Amino acids regulate mTORC1"/>
</dbReference>
<dbReference type="Proteomes" id="UP000008143">
    <property type="component" value="Chromosome 1"/>
</dbReference>
<dbReference type="Bgee" id="ENSXETG00000028090">
    <property type="expression patterns" value="Expressed in ovary and 13 other cell types or tissues"/>
</dbReference>
<dbReference type="GO" id="GO:0005770">
    <property type="term" value="C:late endosome"/>
    <property type="evidence" value="ECO:0000250"/>
    <property type="project" value="UniProtKB"/>
</dbReference>
<dbReference type="GO" id="GO:0031902">
    <property type="term" value="C:late endosome membrane"/>
    <property type="evidence" value="ECO:0007669"/>
    <property type="project" value="UniProtKB-SubCell"/>
</dbReference>
<dbReference type="GO" id="GO:0005765">
    <property type="term" value="C:lysosomal membrane"/>
    <property type="evidence" value="ECO:0007669"/>
    <property type="project" value="UniProtKB-SubCell"/>
</dbReference>
<dbReference type="GO" id="GO:0005764">
    <property type="term" value="C:lysosome"/>
    <property type="evidence" value="ECO:0000250"/>
    <property type="project" value="UniProtKB"/>
</dbReference>
<dbReference type="GO" id="GO:0015171">
    <property type="term" value="F:amino acid transmembrane transporter activity"/>
    <property type="evidence" value="ECO:0000250"/>
    <property type="project" value="UniProtKB"/>
</dbReference>
<dbReference type="GO" id="GO:0034618">
    <property type="term" value="F:arginine binding"/>
    <property type="evidence" value="ECO:0000250"/>
    <property type="project" value="UniProtKB"/>
</dbReference>
<dbReference type="GO" id="GO:0015485">
    <property type="term" value="F:cholesterol binding"/>
    <property type="evidence" value="ECO:0000250"/>
    <property type="project" value="UniProtKB"/>
</dbReference>
<dbReference type="GO" id="GO:0005085">
    <property type="term" value="F:guanyl-nucleotide exchange factor activity"/>
    <property type="evidence" value="ECO:0000250"/>
    <property type="project" value="UniProtKB"/>
</dbReference>
<dbReference type="GO" id="GO:0061459">
    <property type="term" value="F:L-arginine transmembrane transporter activity"/>
    <property type="evidence" value="ECO:0000250"/>
    <property type="project" value="UniProtKB"/>
</dbReference>
<dbReference type="GO" id="GO:0015182">
    <property type="term" value="F:L-asparagine transmembrane transporter activity"/>
    <property type="evidence" value="ECO:0000250"/>
    <property type="project" value="UniProtKB"/>
</dbReference>
<dbReference type="GO" id="GO:0015186">
    <property type="term" value="F:L-glutamine transmembrane transporter activity"/>
    <property type="evidence" value="ECO:0000250"/>
    <property type="project" value="UniProtKB"/>
</dbReference>
<dbReference type="GO" id="GO:0046872">
    <property type="term" value="F:metal ion binding"/>
    <property type="evidence" value="ECO:0007669"/>
    <property type="project" value="UniProtKB-KW"/>
</dbReference>
<dbReference type="GO" id="GO:0032935">
    <property type="term" value="F:sterol sensor activity"/>
    <property type="evidence" value="ECO:0000250"/>
    <property type="project" value="UniProtKB"/>
</dbReference>
<dbReference type="GO" id="GO:0003333">
    <property type="term" value="P:amino acid transmembrane transport"/>
    <property type="evidence" value="ECO:0000250"/>
    <property type="project" value="UniProtKB"/>
</dbReference>
<dbReference type="GO" id="GO:0006867">
    <property type="term" value="P:asparagine transport"/>
    <property type="evidence" value="ECO:0000250"/>
    <property type="project" value="UniProtKB"/>
</dbReference>
<dbReference type="GO" id="GO:0071230">
    <property type="term" value="P:cellular response to amino acid stimulus"/>
    <property type="evidence" value="ECO:0000250"/>
    <property type="project" value="UniProtKB"/>
</dbReference>
<dbReference type="GO" id="GO:0006868">
    <property type="term" value="P:glutamine transport"/>
    <property type="evidence" value="ECO:0000250"/>
    <property type="project" value="UniProtKB"/>
</dbReference>
<dbReference type="GO" id="GO:1903826">
    <property type="term" value="P:L-arginine transmembrane transport"/>
    <property type="evidence" value="ECO:0000250"/>
    <property type="project" value="UniProtKB"/>
</dbReference>
<dbReference type="GO" id="GO:0032008">
    <property type="term" value="P:positive regulation of TOR signaling"/>
    <property type="evidence" value="ECO:0000250"/>
    <property type="project" value="UniProtKB"/>
</dbReference>
<dbReference type="GO" id="GO:1904263">
    <property type="term" value="P:positive regulation of TORC1 signaling"/>
    <property type="evidence" value="ECO:0000250"/>
    <property type="project" value="UniProtKB"/>
</dbReference>
<dbReference type="InterPro" id="IPR013057">
    <property type="entry name" value="AA_transpt_TM"/>
</dbReference>
<dbReference type="PANTHER" id="PTHR22950">
    <property type="entry name" value="AMINO ACID TRANSPORTER"/>
    <property type="match status" value="1"/>
</dbReference>
<dbReference type="PANTHER" id="PTHR22950:SF244">
    <property type="entry name" value="NEUTRAL AMINO ACID TRANSPORTER 9"/>
    <property type="match status" value="1"/>
</dbReference>
<dbReference type="Pfam" id="PF01490">
    <property type="entry name" value="Aa_trans"/>
    <property type="match status" value="2"/>
</dbReference>
<feature type="chain" id="PRO_0000328845" description="Neutral amino acid transporter 9">
    <location>
        <begin position="1"/>
        <end position="554"/>
    </location>
</feature>
<feature type="topological domain" description="Cytoplasmic" evidence="4">
    <location>
        <begin position="1"/>
        <end position="112"/>
    </location>
</feature>
<feature type="transmembrane region" description="Helical; Name=1" evidence="1">
    <location>
        <begin position="113"/>
        <end position="133"/>
    </location>
</feature>
<feature type="topological domain" description="Lumenal" evidence="4">
    <location>
        <begin position="134"/>
        <end position="139"/>
    </location>
</feature>
<feature type="transmembrane region" description="Helical; Name=2" evidence="1">
    <location>
        <begin position="140"/>
        <end position="160"/>
    </location>
</feature>
<feature type="topological domain" description="Cytoplasmic" evidence="4">
    <location>
        <begin position="161"/>
        <end position="191"/>
    </location>
</feature>
<feature type="transmembrane region" description="Helical; Name=3" evidence="1">
    <location>
        <begin position="192"/>
        <end position="218"/>
    </location>
</feature>
<feature type="topological domain" description="Lumenal" evidence="4">
    <location>
        <begin position="219"/>
        <end position="276"/>
    </location>
</feature>
<feature type="transmembrane region" description="Helical; Name=4" evidence="1">
    <location>
        <begin position="277"/>
        <end position="293"/>
    </location>
</feature>
<feature type="topological domain" description="Cytoplasmic" evidence="4">
    <location>
        <begin position="294"/>
        <end position="302"/>
    </location>
</feature>
<feature type="transmembrane region" description="Helical; Name=5" evidence="1">
    <location>
        <begin position="303"/>
        <end position="327"/>
    </location>
</feature>
<feature type="topological domain" description="Lumenal" evidence="4">
    <location>
        <begin position="328"/>
        <end position="349"/>
    </location>
</feature>
<feature type="transmembrane region" description="Helical; Name=6" evidence="1">
    <location>
        <begin position="350"/>
        <end position="370"/>
    </location>
</feature>
<feature type="topological domain" description="Cytoplasmic" evidence="4">
    <location>
        <begin position="371"/>
        <end position="387"/>
    </location>
</feature>
<feature type="transmembrane region" description="Helical; Name=7" evidence="1">
    <location>
        <begin position="388"/>
        <end position="408"/>
    </location>
</feature>
<feature type="topological domain" description="Lumenal" evidence="4">
    <location>
        <begin position="409"/>
        <end position="430"/>
    </location>
</feature>
<feature type="transmembrane region" description="Helical; Name=8" evidence="1">
    <location>
        <begin position="431"/>
        <end position="451"/>
    </location>
</feature>
<feature type="topological domain" description="Cytoplasmic" evidence="4">
    <location>
        <begin position="452"/>
        <end position="472"/>
    </location>
</feature>
<feature type="transmembrane region" description="Helical; Name=9" evidence="1">
    <location>
        <begin position="473"/>
        <end position="493"/>
    </location>
</feature>
<feature type="topological domain" description="Lumenal" evidence="4">
    <location>
        <begin position="494"/>
        <end position="500"/>
    </location>
</feature>
<feature type="transmembrane region" description="Helical; Name=10" evidence="1">
    <location>
        <begin position="501"/>
        <end position="521"/>
    </location>
</feature>
<feature type="topological domain" description="Cytoplasmic" evidence="4">
    <location>
        <begin position="522"/>
        <end position="533"/>
    </location>
</feature>
<feature type="transmembrane region" description="Helical; Name=11" evidence="1">
    <location>
        <begin position="534"/>
        <end position="554"/>
    </location>
</feature>
<feature type="region of interest" description="Important for arginine binding and amino acid transport" evidence="1">
    <location>
        <begin position="122"/>
        <end position="127"/>
    </location>
</feature>
<feature type="short sequence motif" description="CARC motif" evidence="2">
    <location>
        <begin position="437"/>
        <end position="447"/>
    </location>
</feature>
<feature type="short sequence motif" description="CRAC motif" evidence="2">
    <location>
        <begin position="450"/>
        <end position="456"/>
    </location>
</feature>
<feature type="binding site" evidence="1">
    <location>
        <position position="127"/>
    </location>
    <ligand>
        <name>arginine</name>
        <dbReference type="ChEBI" id="CHEBI:32696"/>
    </ligand>
</feature>
<feature type="glycosylation site" description="N-linked (GlcNAc...) asparagine" evidence="3">
    <location>
        <position position="232"/>
    </location>
</feature>
<feature type="glycosylation site" description="N-linked (GlcNAc...) asparagine" evidence="3">
    <location>
        <position position="241"/>
    </location>
</feature>
<feature type="glycosylation site" description="N-linked (GlcNAc...) asparagine" evidence="3">
    <location>
        <position position="258"/>
    </location>
</feature>
<feature type="glycosylation site" description="N-linked (GlcNAc...) asparagine" evidence="3">
    <location>
        <position position="267"/>
    </location>
</feature>
<feature type="disulfide bond" evidence="1">
    <location>
        <begin position="248"/>
        <end position="417"/>
    </location>
</feature>
<sequence>MDSDQTPLINPSLFEECAQNHFAATDPRSRRPFHIEPSYITSINDDDPQRITSVASAMNKRIHYYSKLSNPSDKGLIAPDHVLPAPEEIYVYSPLGTALKIDGSDGTGKNSSIVTIFMIWNTMMGTSILSIPWGIKQAGFTTGVCILFLMGILTLYCCYRVVKSRGTIPLTDTSNWEFPDVCQYYFGSFGRWSSLLFSLVSLIGAMIVYWVLMSNFLFNTGKFIYNYVNDVNVTDDVLSNNGSDKVICPNPDSTRPLNKSMDTYFGNGTNYEQFETWWSKTNTVPFYLVVLLLPLLSFRSPSFFAKFNILGTVSIIYLVSLVTLKAAHLGFHLRFSWNQVQEFFVPEFRLSFPQLTGILTLAFFIHNCIITLLKNNRNQKNNVRDLSIAYLLVGLTYIYVGVAVFASFPSPPLSKQCIQQNFLDNFPSSDILAFVARIFLLFQMMTVYPLLGYLVRVQLLGHIFGDIYPSVFHVLALNIAVVGVGVIMARFYPNIGGIIRFSGAACGLAFVFVYPSLIHMISLHRRGQLKVHSILIHVSIIVLGIANLIAQFFM</sequence>
<protein>
    <recommendedName>
        <fullName evidence="2">Neutral amino acid transporter 9</fullName>
    </recommendedName>
    <alternativeName>
        <fullName>Solute carrier family 38 member 9</fullName>
    </alternativeName>
</protein>
<keyword id="KW-0029">Amino-acid transport</keyword>
<keyword id="KW-1015">Disulfide bond</keyword>
<keyword id="KW-0967">Endosome</keyword>
<keyword id="KW-0325">Glycoprotein</keyword>
<keyword id="KW-0458">Lysosome</keyword>
<keyword id="KW-0472">Membrane</keyword>
<keyword id="KW-0479">Metal-binding</keyword>
<keyword id="KW-1185">Reference proteome</keyword>
<keyword id="KW-0915">Sodium</keyword>
<keyword id="KW-0812">Transmembrane</keyword>
<keyword id="KW-1133">Transmembrane helix</keyword>
<keyword id="KW-0813">Transport</keyword>
<reference key="1">
    <citation type="submission" date="2004-12" db="EMBL/GenBank/DDBJ databases">
        <authorList>
            <consortium name="NIH - Xenopus Gene Collection (XGC) project"/>
        </authorList>
    </citation>
    <scope>NUCLEOTIDE SEQUENCE [LARGE SCALE MRNA]</scope>
    <source>
        <tissue>Embryo</tissue>
    </source>
</reference>
<evidence type="ECO:0000250" key="1">
    <source>
        <dbReference type="UniProtKB" id="Q08BA4"/>
    </source>
</evidence>
<evidence type="ECO:0000250" key="2">
    <source>
        <dbReference type="UniProtKB" id="Q8NBW4"/>
    </source>
</evidence>
<evidence type="ECO:0000255" key="3">
    <source>
        <dbReference type="PROSITE-ProRule" id="PRU00498"/>
    </source>
</evidence>
<evidence type="ECO:0000305" key="4"/>
<accession>Q5M7S0</accession>
<gene>
    <name evidence="2" type="primary">slc38a9</name>
</gene>
<organism>
    <name type="scientific">Xenopus tropicalis</name>
    <name type="common">Western clawed frog</name>
    <name type="synonym">Silurana tropicalis</name>
    <dbReference type="NCBI Taxonomy" id="8364"/>
    <lineage>
        <taxon>Eukaryota</taxon>
        <taxon>Metazoa</taxon>
        <taxon>Chordata</taxon>
        <taxon>Craniata</taxon>
        <taxon>Vertebrata</taxon>
        <taxon>Euteleostomi</taxon>
        <taxon>Amphibia</taxon>
        <taxon>Batrachia</taxon>
        <taxon>Anura</taxon>
        <taxon>Pipoidea</taxon>
        <taxon>Pipidae</taxon>
        <taxon>Xenopodinae</taxon>
        <taxon>Xenopus</taxon>
        <taxon>Silurana</taxon>
    </lineage>
</organism>
<proteinExistence type="evidence at transcript level"/>
<comment type="function">
    <text evidence="2">Lysosomal amino acid transporter involved in the activation of mTORC1 in response to amino acid levels. Probably acts as an amino acid sensor of the Rag GTPases and Ragulator complexes, 2 complexes involved in amino acid sensing and activation of mTORC1, a signaling complex promoting cell growth in response to growth factors, energy levels, and amino acids. Following activation by amino acids, the Ragulator and Rag GTPases function as a scaffold recruiting mTORC1 to lysosomes where it is in turn activated. SLC38A9 mediates transport of amino acids with low capacity and specificity with a slight preference for polar amino acids. Acts as an arginine sensor. Following activation by arginine binding, mediates transport of L-glutamine, leucine and tyrosine with high efficiency, and is required for the efficient utilization of these amino acids after lysosomal protein degradation. However, the transport mechanism is not well defined and the role of sodium is not clear. Guanine exchange factor (GEF) that, upon arginine binding, stimulates GDP release from RRAGA and therefore activates the Rag GTPase heterodimer and the mTORC1 pathway in response to nutrient sufficiency.</text>
</comment>
<comment type="catalytic activity">
    <reaction evidence="2">
        <text>L-leucine(in) = L-leucine(out)</text>
        <dbReference type="Rhea" id="RHEA:73011"/>
        <dbReference type="ChEBI" id="CHEBI:57427"/>
    </reaction>
</comment>
<comment type="catalytic activity">
    <reaction evidence="2">
        <text>L-tyrosine(in) = L-tyrosine(out)</text>
        <dbReference type="Rhea" id="RHEA:68572"/>
        <dbReference type="ChEBI" id="CHEBI:58315"/>
    </reaction>
</comment>
<comment type="catalytic activity">
    <reaction evidence="2">
        <text>L-glutamine(out) = L-glutamine(in)</text>
        <dbReference type="Rhea" id="RHEA:73419"/>
        <dbReference type="ChEBI" id="CHEBI:58359"/>
    </reaction>
</comment>
<comment type="catalytic activity">
    <reaction evidence="2">
        <text>L-asparagine(out) = L-asparagine(in)</text>
        <dbReference type="Rhea" id="RHEA:73423"/>
        <dbReference type="ChEBI" id="CHEBI:58048"/>
    </reaction>
</comment>
<comment type="subunit">
    <text evidence="2">Associated component of the Ragulator complex. Associated component of the Rag GTPases heterodimers.</text>
</comment>
<comment type="subcellular location">
    <subcellularLocation>
        <location evidence="2">Lysosome membrane</location>
        <topology evidence="1">Multi-pass membrane protein</topology>
    </subcellularLocation>
    <subcellularLocation>
        <location evidence="2">Late endosome membrane</location>
        <topology evidence="1">Multi-pass membrane protein</topology>
    </subcellularLocation>
</comment>
<comment type="domain">
    <text evidence="1 2">The cytosolic N-terminus part of the protein mediates interaction with the Ragulator complex. The cytosolic N-terminus part of the protein mediates interaction with the Rag GTPase heterodimer in a RRAGA GDP-loaded state dependent and upon arginine binding, leading to the GDP release and SLC38A9 dissociation from the activated Rag GTPase heterodimer (By similarity). The cytosolic N-terminus part of the protein exists at least in two distinct conformations; The first is when the N-terminus is bound snugly in the arginine binding site (in the absence of arginine, low luminal arginine state) and the second is where the N-terminus is released and the substrate-binding site is occupied by arginine (in the presence of arginine, high luminal arginine state) (By similarity).</text>
</comment>
<comment type="domain">
    <text evidence="2">The CARC and CRAC motifs mediate binding to cholesterol.</text>
</comment>
<comment type="PTM">
    <text evidence="2">Glycosylated.</text>
</comment>
<comment type="similarity">
    <text evidence="4">Belongs to the amino acid/polyamine transporter 2 family. SLC38A9 subfamily.</text>
</comment>
<name>S38A9_XENTR</name>